<keyword id="KW-0963">Cytoplasm</keyword>
<keyword id="KW-0251">Elongation factor</keyword>
<keyword id="KW-0342">GTP-binding</keyword>
<keyword id="KW-0547">Nucleotide-binding</keyword>
<keyword id="KW-0648">Protein biosynthesis</keyword>
<comment type="function">
    <text evidence="1">Catalyzes the GTP-dependent ribosomal translocation step during translation elongation. During this step, the ribosome changes from the pre-translocational (PRE) to the post-translocational (POST) state as the newly formed A-site-bound peptidyl-tRNA and P-site-bound deacylated tRNA move to the P and E sites, respectively. Catalyzes the coordinated movement of the two tRNA molecules, the mRNA and conformational changes in the ribosome.</text>
</comment>
<comment type="subcellular location">
    <subcellularLocation>
        <location evidence="1">Cytoplasm</location>
    </subcellularLocation>
</comment>
<comment type="similarity">
    <text evidence="1">Belongs to the TRAFAC class translation factor GTPase superfamily. Classic translation factor GTPase family. EF-G/EF-2 subfamily.</text>
</comment>
<organism>
    <name type="scientific">Paenarthrobacter aurescens (strain TC1)</name>
    <dbReference type="NCBI Taxonomy" id="290340"/>
    <lineage>
        <taxon>Bacteria</taxon>
        <taxon>Bacillati</taxon>
        <taxon>Actinomycetota</taxon>
        <taxon>Actinomycetes</taxon>
        <taxon>Micrococcales</taxon>
        <taxon>Micrococcaceae</taxon>
        <taxon>Paenarthrobacter</taxon>
    </lineage>
</organism>
<sequence>MAQDVLTDLNKVRNIGIMAHIDAGKTTTTERILFYTGVNHKIGETHDGASTTDWMEQEKERGITITSAAVTCFWDKNQINIIDTPGHVDFTVEVERSLRVLDGAVAVFDGKEGVEPQSETVWRQADKYNVPRICFVNKMDKLGADFYFTVDTIISRLGAKPLVMQLPIGAENDFIGVVDLLEMRALVWPGDAKGDVTMGASYEVQEIPADLQAKAEEYRAQLVETVAEASEELMEKYLEGEELTLEEIKAGIRKMTINSELYPVFCGSAFKNRGVQPMLDAVVDFLPNPLDVPPMIGHDPRDEEKELTRKPSADEPFSALAFKIAAHPFFGQLTFVRVYSGHVEAGAQVVNSTKGKKERIGKLFQMHANKEMPVEGATAGHIYAAIGLKDTTTGDTLCDANNQIVLESMSFPEPVISVAIEPNTKGDQEKLSTAIQKLSAEDPTFQVSLNEDTGQTIIAGMGELHLDILVDRMRREFKVEANVGKPQVAYRETIKRAVERLDYTHKKQTGGSGQFAKIQIAIEPMDTASGELYAFENKVTGGRVPREYIPSVDAGIQDALNDGVLAGYPVVGIKATLIDGASHDVDSSEMAFKIAGRMAFKEAARKANPVLLEPLMDVEVRTPEEYMGDVIGDLNARRGQMQSMEDAAGVKVIRAHVPLSGMFGYIGDLRSKTQGRAVYSMTFNSYAEVPKAVADEIIQKTRGE</sequence>
<dbReference type="EMBL" id="CP000474">
    <property type="protein sequence ID" value="ABM06493.1"/>
    <property type="molecule type" value="Genomic_DNA"/>
</dbReference>
<dbReference type="RefSeq" id="WP_011775599.1">
    <property type="nucleotide sequence ID" value="NC_008711.1"/>
</dbReference>
<dbReference type="SMR" id="A1R8V0"/>
<dbReference type="STRING" id="290340.AAur_2953"/>
<dbReference type="GeneID" id="97301798"/>
<dbReference type="KEGG" id="aau:AAur_2953"/>
<dbReference type="eggNOG" id="COG0480">
    <property type="taxonomic scope" value="Bacteria"/>
</dbReference>
<dbReference type="HOGENOM" id="CLU_002794_4_1_11"/>
<dbReference type="OrthoDB" id="9801472at2"/>
<dbReference type="Proteomes" id="UP000000637">
    <property type="component" value="Chromosome"/>
</dbReference>
<dbReference type="GO" id="GO:0005737">
    <property type="term" value="C:cytoplasm"/>
    <property type="evidence" value="ECO:0007669"/>
    <property type="project" value="UniProtKB-SubCell"/>
</dbReference>
<dbReference type="GO" id="GO:0005525">
    <property type="term" value="F:GTP binding"/>
    <property type="evidence" value="ECO:0007669"/>
    <property type="project" value="UniProtKB-UniRule"/>
</dbReference>
<dbReference type="GO" id="GO:0003924">
    <property type="term" value="F:GTPase activity"/>
    <property type="evidence" value="ECO:0007669"/>
    <property type="project" value="InterPro"/>
</dbReference>
<dbReference type="GO" id="GO:0003746">
    <property type="term" value="F:translation elongation factor activity"/>
    <property type="evidence" value="ECO:0007669"/>
    <property type="project" value="UniProtKB-UniRule"/>
</dbReference>
<dbReference type="GO" id="GO:0032790">
    <property type="term" value="P:ribosome disassembly"/>
    <property type="evidence" value="ECO:0007669"/>
    <property type="project" value="TreeGrafter"/>
</dbReference>
<dbReference type="CDD" id="cd01886">
    <property type="entry name" value="EF-G"/>
    <property type="match status" value="1"/>
</dbReference>
<dbReference type="CDD" id="cd16262">
    <property type="entry name" value="EFG_III"/>
    <property type="match status" value="1"/>
</dbReference>
<dbReference type="CDD" id="cd01434">
    <property type="entry name" value="EFG_mtEFG1_IV"/>
    <property type="match status" value="1"/>
</dbReference>
<dbReference type="CDD" id="cd03713">
    <property type="entry name" value="EFG_mtEFG_C"/>
    <property type="match status" value="1"/>
</dbReference>
<dbReference type="CDD" id="cd04088">
    <property type="entry name" value="EFG_mtEFG_II"/>
    <property type="match status" value="1"/>
</dbReference>
<dbReference type="FunFam" id="2.40.30.10:FF:000006">
    <property type="entry name" value="Elongation factor G"/>
    <property type="match status" value="1"/>
</dbReference>
<dbReference type="FunFam" id="3.30.230.10:FF:000003">
    <property type="entry name" value="Elongation factor G"/>
    <property type="match status" value="1"/>
</dbReference>
<dbReference type="FunFam" id="3.30.70.240:FF:000001">
    <property type="entry name" value="Elongation factor G"/>
    <property type="match status" value="1"/>
</dbReference>
<dbReference type="FunFam" id="3.30.70.870:FF:000001">
    <property type="entry name" value="Elongation factor G"/>
    <property type="match status" value="1"/>
</dbReference>
<dbReference type="FunFam" id="3.40.50.300:FF:000029">
    <property type="entry name" value="Elongation factor G"/>
    <property type="match status" value="1"/>
</dbReference>
<dbReference type="Gene3D" id="3.30.230.10">
    <property type="match status" value="1"/>
</dbReference>
<dbReference type="Gene3D" id="3.30.70.240">
    <property type="match status" value="1"/>
</dbReference>
<dbReference type="Gene3D" id="3.30.70.870">
    <property type="entry name" value="Elongation Factor G (Translational Gtpase), domain 3"/>
    <property type="match status" value="1"/>
</dbReference>
<dbReference type="Gene3D" id="3.40.50.300">
    <property type="entry name" value="P-loop containing nucleotide triphosphate hydrolases"/>
    <property type="match status" value="1"/>
</dbReference>
<dbReference type="Gene3D" id="2.40.30.10">
    <property type="entry name" value="Translation factors"/>
    <property type="match status" value="1"/>
</dbReference>
<dbReference type="HAMAP" id="MF_00054_B">
    <property type="entry name" value="EF_G_EF_2_B"/>
    <property type="match status" value="1"/>
</dbReference>
<dbReference type="InterPro" id="IPR041095">
    <property type="entry name" value="EFG_II"/>
</dbReference>
<dbReference type="InterPro" id="IPR009022">
    <property type="entry name" value="EFG_III"/>
</dbReference>
<dbReference type="InterPro" id="IPR035647">
    <property type="entry name" value="EFG_III/V"/>
</dbReference>
<dbReference type="InterPro" id="IPR047872">
    <property type="entry name" value="EFG_IV"/>
</dbReference>
<dbReference type="InterPro" id="IPR035649">
    <property type="entry name" value="EFG_V"/>
</dbReference>
<dbReference type="InterPro" id="IPR000640">
    <property type="entry name" value="EFG_V-like"/>
</dbReference>
<dbReference type="InterPro" id="IPR004161">
    <property type="entry name" value="EFTu-like_2"/>
</dbReference>
<dbReference type="InterPro" id="IPR031157">
    <property type="entry name" value="G_TR_CS"/>
</dbReference>
<dbReference type="InterPro" id="IPR027417">
    <property type="entry name" value="P-loop_NTPase"/>
</dbReference>
<dbReference type="InterPro" id="IPR020568">
    <property type="entry name" value="Ribosomal_Su5_D2-typ_SF"/>
</dbReference>
<dbReference type="InterPro" id="IPR014721">
    <property type="entry name" value="Ribsml_uS5_D2-typ_fold_subgr"/>
</dbReference>
<dbReference type="InterPro" id="IPR005225">
    <property type="entry name" value="Small_GTP-bd"/>
</dbReference>
<dbReference type="InterPro" id="IPR000795">
    <property type="entry name" value="T_Tr_GTP-bd_dom"/>
</dbReference>
<dbReference type="InterPro" id="IPR009000">
    <property type="entry name" value="Transl_B-barrel_sf"/>
</dbReference>
<dbReference type="InterPro" id="IPR004540">
    <property type="entry name" value="Transl_elong_EFG/EF2"/>
</dbReference>
<dbReference type="InterPro" id="IPR005517">
    <property type="entry name" value="Transl_elong_EFG/EF2_IV"/>
</dbReference>
<dbReference type="NCBIfam" id="TIGR00484">
    <property type="entry name" value="EF-G"/>
    <property type="match status" value="1"/>
</dbReference>
<dbReference type="NCBIfam" id="NF009381">
    <property type="entry name" value="PRK12740.1-5"/>
    <property type="match status" value="1"/>
</dbReference>
<dbReference type="NCBIfam" id="TIGR00231">
    <property type="entry name" value="small_GTP"/>
    <property type="match status" value="1"/>
</dbReference>
<dbReference type="PANTHER" id="PTHR43261:SF1">
    <property type="entry name" value="RIBOSOME-RELEASING FACTOR 2, MITOCHONDRIAL"/>
    <property type="match status" value="1"/>
</dbReference>
<dbReference type="PANTHER" id="PTHR43261">
    <property type="entry name" value="TRANSLATION ELONGATION FACTOR G-RELATED"/>
    <property type="match status" value="1"/>
</dbReference>
<dbReference type="Pfam" id="PF00679">
    <property type="entry name" value="EFG_C"/>
    <property type="match status" value="1"/>
</dbReference>
<dbReference type="Pfam" id="PF14492">
    <property type="entry name" value="EFG_III"/>
    <property type="match status" value="1"/>
</dbReference>
<dbReference type="Pfam" id="PF03764">
    <property type="entry name" value="EFG_IV"/>
    <property type="match status" value="1"/>
</dbReference>
<dbReference type="Pfam" id="PF00009">
    <property type="entry name" value="GTP_EFTU"/>
    <property type="match status" value="1"/>
</dbReference>
<dbReference type="Pfam" id="PF03144">
    <property type="entry name" value="GTP_EFTU_D2"/>
    <property type="match status" value="1"/>
</dbReference>
<dbReference type="PRINTS" id="PR00315">
    <property type="entry name" value="ELONGATNFCT"/>
</dbReference>
<dbReference type="SMART" id="SM00838">
    <property type="entry name" value="EFG_C"/>
    <property type="match status" value="1"/>
</dbReference>
<dbReference type="SMART" id="SM00889">
    <property type="entry name" value="EFG_IV"/>
    <property type="match status" value="1"/>
</dbReference>
<dbReference type="SUPFAM" id="SSF54980">
    <property type="entry name" value="EF-G C-terminal domain-like"/>
    <property type="match status" value="2"/>
</dbReference>
<dbReference type="SUPFAM" id="SSF52540">
    <property type="entry name" value="P-loop containing nucleoside triphosphate hydrolases"/>
    <property type="match status" value="1"/>
</dbReference>
<dbReference type="SUPFAM" id="SSF54211">
    <property type="entry name" value="Ribosomal protein S5 domain 2-like"/>
    <property type="match status" value="1"/>
</dbReference>
<dbReference type="SUPFAM" id="SSF50447">
    <property type="entry name" value="Translation proteins"/>
    <property type="match status" value="1"/>
</dbReference>
<dbReference type="PROSITE" id="PS00301">
    <property type="entry name" value="G_TR_1"/>
    <property type="match status" value="1"/>
</dbReference>
<dbReference type="PROSITE" id="PS51722">
    <property type="entry name" value="G_TR_2"/>
    <property type="match status" value="1"/>
</dbReference>
<evidence type="ECO:0000255" key="1">
    <source>
        <dbReference type="HAMAP-Rule" id="MF_00054"/>
    </source>
</evidence>
<gene>
    <name evidence="1" type="primary">fusA</name>
    <name type="ordered locus">AAur_2953</name>
</gene>
<protein>
    <recommendedName>
        <fullName evidence="1">Elongation factor G</fullName>
        <shortName evidence="1">EF-G</shortName>
    </recommendedName>
</protein>
<name>EFG_PAEAT</name>
<proteinExistence type="inferred from homology"/>
<reference key="1">
    <citation type="journal article" date="2006" name="PLoS Genet.">
        <title>Secrets of soil survival revealed by the genome sequence of Arthrobacter aurescens TC1.</title>
        <authorList>
            <person name="Mongodin E.F."/>
            <person name="Shapir N."/>
            <person name="Daugherty S.C."/>
            <person name="DeBoy R.T."/>
            <person name="Emerson J.B."/>
            <person name="Shvartzbeyn A."/>
            <person name="Radune D."/>
            <person name="Vamathevan J."/>
            <person name="Riggs F."/>
            <person name="Grinberg V."/>
            <person name="Khouri H.M."/>
            <person name="Wackett L.P."/>
            <person name="Nelson K.E."/>
            <person name="Sadowsky M.J."/>
        </authorList>
    </citation>
    <scope>NUCLEOTIDE SEQUENCE [LARGE SCALE GENOMIC DNA]</scope>
    <source>
        <strain>TC1</strain>
    </source>
</reference>
<accession>A1R8V0</accession>
<feature type="chain" id="PRO_0000335833" description="Elongation factor G">
    <location>
        <begin position="1"/>
        <end position="704"/>
    </location>
</feature>
<feature type="domain" description="tr-type G">
    <location>
        <begin position="10"/>
        <end position="290"/>
    </location>
</feature>
<feature type="binding site" evidence="1">
    <location>
        <begin position="19"/>
        <end position="26"/>
    </location>
    <ligand>
        <name>GTP</name>
        <dbReference type="ChEBI" id="CHEBI:37565"/>
    </ligand>
</feature>
<feature type="binding site" evidence="1">
    <location>
        <begin position="83"/>
        <end position="87"/>
    </location>
    <ligand>
        <name>GTP</name>
        <dbReference type="ChEBI" id="CHEBI:37565"/>
    </ligand>
</feature>
<feature type="binding site" evidence="1">
    <location>
        <begin position="137"/>
        <end position="140"/>
    </location>
    <ligand>
        <name>GTP</name>
        <dbReference type="ChEBI" id="CHEBI:37565"/>
    </ligand>
</feature>